<proteinExistence type="inferred from homology"/>
<comment type="function">
    <text evidence="1">The UvrABC repair system catalyzes the recognition and processing of DNA lesions. UvrC both incises the 5' and 3' sides of the lesion. The N-terminal half is responsible for the 3' incision and the C-terminal half is responsible for the 5' incision.</text>
</comment>
<comment type="subunit">
    <text evidence="1">Interacts with UvrB in an incision complex.</text>
</comment>
<comment type="subcellular location">
    <subcellularLocation>
        <location evidence="1">Cytoplasm</location>
    </subcellularLocation>
</comment>
<comment type="similarity">
    <text evidence="1">Belongs to the UvrC family.</text>
</comment>
<name>UVRC_NAUPA</name>
<keyword id="KW-0963">Cytoplasm</keyword>
<keyword id="KW-0227">DNA damage</keyword>
<keyword id="KW-0228">DNA excision</keyword>
<keyword id="KW-0234">DNA repair</keyword>
<keyword id="KW-0267">Excision nuclease</keyword>
<keyword id="KW-0742">SOS response</keyword>
<reference key="1">
    <citation type="journal article" date="2009" name="PLoS Genet.">
        <title>Adaptations to submarine hydrothermal environments exemplified by the genome of Nautilia profundicola.</title>
        <authorList>
            <person name="Campbell B.J."/>
            <person name="Smith J.L."/>
            <person name="Hanson T.E."/>
            <person name="Klotz M.G."/>
            <person name="Stein L.Y."/>
            <person name="Lee C.K."/>
            <person name="Wu D."/>
            <person name="Robinson J.M."/>
            <person name="Khouri H.M."/>
            <person name="Eisen J.A."/>
            <person name="Cary S.C."/>
        </authorList>
    </citation>
    <scope>NUCLEOTIDE SEQUENCE [LARGE SCALE GENOMIC DNA]</scope>
    <source>
        <strain>ATCC BAA-1463 / DSM 18972 / AmH</strain>
    </source>
</reference>
<dbReference type="EMBL" id="CP001279">
    <property type="protein sequence ID" value="ACM92603.1"/>
    <property type="molecule type" value="Genomic_DNA"/>
</dbReference>
<dbReference type="RefSeq" id="WP_012663974.1">
    <property type="nucleotide sequence ID" value="NC_012115.1"/>
</dbReference>
<dbReference type="SMR" id="B9L9T8"/>
<dbReference type="STRING" id="598659.NAMH_0996"/>
<dbReference type="KEGG" id="nam:NAMH_0996"/>
<dbReference type="eggNOG" id="COG0322">
    <property type="taxonomic scope" value="Bacteria"/>
</dbReference>
<dbReference type="HOGENOM" id="CLU_014841_3_2_7"/>
<dbReference type="OrthoDB" id="9804933at2"/>
<dbReference type="Proteomes" id="UP000000448">
    <property type="component" value="Chromosome"/>
</dbReference>
<dbReference type="GO" id="GO:0005737">
    <property type="term" value="C:cytoplasm"/>
    <property type="evidence" value="ECO:0007669"/>
    <property type="project" value="UniProtKB-SubCell"/>
</dbReference>
<dbReference type="GO" id="GO:0009380">
    <property type="term" value="C:excinuclease repair complex"/>
    <property type="evidence" value="ECO:0007669"/>
    <property type="project" value="InterPro"/>
</dbReference>
<dbReference type="GO" id="GO:0003677">
    <property type="term" value="F:DNA binding"/>
    <property type="evidence" value="ECO:0007669"/>
    <property type="project" value="UniProtKB-UniRule"/>
</dbReference>
<dbReference type="GO" id="GO:0009381">
    <property type="term" value="F:excinuclease ABC activity"/>
    <property type="evidence" value="ECO:0007669"/>
    <property type="project" value="UniProtKB-UniRule"/>
</dbReference>
<dbReference type="GO" id="GO:0006289">
    <property type="term" value="P:nucleotide-excision repair"/>
    <property type="evidence" value="ECO:0007669"/>
    <property type="project" value="UniProtKB-UniRule"/>
</dbReference>
<dbReference type="GO" id="GO:0009432">
    <property type="term" value="P:SOS response"/>
    <property type="evidence" value="ECO:0007669"/>
    <property type="project" value="UniProtKB-UniRule"/>
</dbReference>
<dbReference type="CDD" id="cd10434">
    <property type="entry name" value="GIY-YIG_UvrC_Cho"/>
    <property type="match status" value="1"/>
</dbReference>
<dbReference type="FunFam" id="3.40.1440.10:FF:000001">
    <property type="entry name" value="UvrABC system protein C"/>
    <property type="match status" value="1"/>
</dbReference>
<dbReference type="Gene3D" id="1.10.150.20">
    <property type="entry name" value="5' to 3' exonuclease, C-terminal subdomain"/>
    <property type="match status" value="1"/>
</dbReference>
<dbReference type="Gene3D" id="3.40.1440.10">
    <property type="entry name" value="GIY-YIG endonuclease"/>
    <property type="match status" value="1"/>
</dbReference>
<dbReference type="Gene3D" id="4.10.860.10">
    <property type="entry name" value="UVR domain"/>
    <property type="match status" value="1"/>
</dbReference>
<dbReference type="Gene3D" id="3.30.420.340">
    <property type="entry name" value="UvrC, RNAse H endonuclease domain"/>
    <property type="match status" value="1"/>
</dbReference>
<dbReference type="HAMAP" id="MF_00203">
    <property type="entry name" value="UvrC"/>
    <property type="match status" value="1"/>
</dbReference>
<dbReference type="InterPro" id="IPR000305">
    <property type="entry name" value="GIY-YIG_endonuc"/>
</dbReference>
<dbReference type="InterPro" id="IPR035901">
    <property type="entry name" value="GIY-YIG_endonuc_sf"/>
</dbReference>
<dbReference type="InterPro" id="IPR047296">
    <property type="entry name" value="GIY-YIG_UvrC_Cho"/>
</dbReference>
<dbReference type="InterPro" id="IPR010994">
    <property type="entry name" value="RuvA_2-like"/>
</dbReference>
<dbReference type="InterPro" id="IPR001943">
    <property type="entry name" value="UVR_dom"/>
</dbReference>
<dbReference type="InterPro" id="IPR036876">
    <property type="entry name" value="UVR_dom_sf"/>
</dbReference>
<dbReference type="InterPro" id="IPR050066">
    <property type="entry name" value="UvrABC_protein_C"/>
</dbReference>
<dbReference type="InterPro" id="IPR004791">
    <property type="entry name" value="UvrC"/>
</dbReference>
<dbReference type="InterPro" id="IPR001162">
    <property type="entry name" value="UvrC_RNase_H_dom"/>
</dbReference>
<dbReference type="InterPro" id="IPR038476">
    <property type="entry name" value="UvrC_RNase_H_dom_sf"/>
</dbReference>
<dbReference type="NCBIfam" id="TIGR00194">
    <property type="entry name" value="uvrC"/>
    <property type="match status" value="1"/>
</dbReference>
<dbReference type="PANTHER" id="PTHR30562:SF1">
    <property type="entry name" value="UVRABC SYSTEM PROTEIN C"/>
    <property type="match status" value="1"/>
</dbReference>
<dbReference type="PANTHER" id="PTHR30562">
    <property type="entry name" value="UVRC/OXIDOREDUCTASE"/>
    <property type="match status" value="1"/>
</dbReference>
<dbReference type="Pfam" id="PF01541">
    <property type="entry name" value="GIY-YIG"/>
    <property type="match status" value="1"/>
</dbReference>
<dbReference type="Pfam" id="PF14520">
    <property type="entry name" value="HHH_5"/>
    <property type="match status" value="1"/>
</dbReference>
<dbReference type="Pfam" id="PF02151">
    <property type="entry name" value="UVR"/>
    <property type="match status" value="1"/>
</dbReference>
<dbReference type="Pfam" id="PF22920">
    <property type="entry name" value="UvrC_RNaseH"/>
    <property type="match status" value="1"/>
</dbReference>
<dbReference type="Pfam" id="PF08459">
    <property type="entry name" value="UvrC_RNaseH_dom"/>
    <property type="match status" value="1"/>
</dbReference>
<dbReference type="SMART" id="SM00465">
    <property type="entry name" value="GIYc"/>
    <property type="match status" value="1"/>
</dbReference>
<dbReference type="SUPFAM" id="SSF46600">
    <property type="entry name" value="C-terminal UvrC-binding domain of UvrB"/>
    <property type="match status" value="1"/>
</dbReference>
<dbReference type="SUPFAM" id="SSF82771">
    <property type="entry name" value="GIY-YIG endonuclease"/>
    <property type="match status" value="1"/>
</dbReference>
<dbReference type="SUPFAM" id="SSF47781">
    <property type="entry name" value="RuvA domain 2-like"/>
    <property type="match status" value="1"/>
</dbReference>
<dbReference type="PROSITE" id="PS50164">
    <property type="entry name" value="GIY_YIG"/>
    <property type="match status" value="1"/>
</dbReference>
<dbReference type="PROSITE" id="PS50151">
    <property type="entry name" value="UVR"/>
    <property type="match status" value="1"/>
</dbReference>
<dbReference type="PROSITE" id="PS50165">
    <property type="entry name" value="UVRC"/>
    <property type="match status" value="1"/>
</dbReference>
<accession>B9L9T8</accession>
<gene>
    <name evidence="1" type="primary">uvrC</name>
    <name type="ordered locus">NAMH_0996</name>
</gene>
<protein>
    <recommendedName>
        <fullName evidence="1">UvrABC system protein C</fullName>
        <shortName evidence="1">Protein UvrC</shortName>
    </recommendedName>
    <alternativeName>
        <fullName evidence="1">Excinuclease ABC subunit C</fullName>
    </alternativeName>
</protein>
<evidence type="ECO:0000255" key="1">
    <source>
        <dbReference type="HAMAP-Rule" id="MF_00203"/>
    </source>
</evidence>
<sequence length="611" mass="70538">MSFSEKIKSLPDQPGIYQYFDENGKLLYIGKAKSLKKRVKSYFRFNPFRPADNLSPRIYKMISEAKDLNYIVVESENDALILENSLIKQLKPKYNILLRDDKTYPYIYIDLDEPFPMPQITRKVVKGKNIKYFGPFSSGASAILKTIYEEIPLVQSKSCLRSGKACLYHQIGRCLAPCEGKVTSREYMKYVDQAIELIHDKEKILEILNQKMQKYAENLQFEEAAEIRDRIKSIESAEIYSHVDLAKLEDLDIFAVEIFNKKAVVIRIFVRQGKVVASSNSVINSQTVPEIGEIYTRAILEFYSTETPFTSSKILVGDDFEEREWLSQVLSEKFGKKISIITPTTKERKSLIKLAKLNALEVIKNQKENTVLDELKILFNLQNTPYKIEVFDTSHMQGEATVGAMVVWEDGKFKKSDYRHYHLEGKDEYSQMRELLTRRAQSFEKSPPPDLWLIDGGKAQLNLAKEIIDSTGANIDVLAISKEKIDAKAHRAKGKAKDKIYFINEKLKVKSEKLNIDKLELSQSDKRLQFLQMLRDEAHRFAIEFHRKTKRKKDTQIDLLQVKGIGKAKMTKLLNYFGSFDNIKKASFDELKDVLNEKDAKAIKEFFKGQK</sequence>
<organism>
    <name type="scientific">Nautilia profundicola (strain ATCC BAA-1463 / DSM 18972 / AmH)</name>
    <dbReference type="NCBI Taxonomy" id="598659"/>
    <lineage>
        <taxon>Bacteria</taxon>
        <taxon>Pseudomonadati</taxon>
        <taxon>Campylobacterota</taxon>
        <taxon>Epsilonproteobacteria</taxon>
        <taxon>Nautiliales</taxon>
        <taxon>Nautiliaceae</taxon>
        <taxon>Nautilia</taxon>
    </lineage>
</organism>
<feature type="chain" id="PRO_1000200595" description="UvrABC system protein C">
    <location>
        <begin position="1"/>
        <end position="611"/>
    </location>
</feature>
<feature type="domain" description="GIY-YIG" evidence="1">
    <location>
        <begin position="12"/>
        <end position="96"/>
    </location>
</feature>
<feature type="domain" description="UVR" evidence="1">
    <location>
        <begin position="202"/>
        <end position="237"/>
    </location>
</feature>